<sequence length="384" mass="41962">MAKHLFTSESVSEGHPDKIADQISDAVLDAILEQDPKARVACETYVKTGMVLVGGEITTSAWVDIEEITRNTVREIGYVHSDMGFDANSCAVLSAIGKQSPDINQGVDRTDPLEQGAGDQGLMFGYATNETDVLMPAPVTYAHRLVQRQAEVRKNGTLPWLRPDAKSQVTFQYDGGKIVGIDAVVLSTQHAEDIEQNVLHDAVMEEIIKPVLPAEWLNESTKYFINPTGRFVIGGPMGDCGLTGRKIIVDTYGGMARHGGGAFSGKDPSKVDRSAAYAARYVAKNIVAAGLADRCEIQVSYAIGVAEPTSIMVETFGTEKIATEQLTLLVREFFDLRPYGLIQMLDLLHPIYKETAAYGHFGREHFPWEKTDKAQLLRDAAGLK</sequence>
<accession>A7MJQ6</accession>
<name>METK_CROS8</name>
<organism>
    <name type="scientific">Cronobacter sakazakii (strain ATCC BAA-894)</name>
    <name type="common">Enterobacter sakazakii</name>
    <dbReference type="NCBI Taxonomy" id="290339"/>
    <lineage>
        <taxon>Bacteria</taxon>
        <taxon>Pseudomonadati</taxon>
        <taxon>Pseudomonadota</taxon>
        <taxon>Gammaproteobacteria</taxon>
        <taxon>Enterobacterales</taxon>
        <taxon>Enterobacteriaceae</taxon>
        <taxon>Cronobacter</taxon>
    </lineage>
</organism>
<gene>
    <name evidence="1" type="primary">metK</name>
    <name type="ordered locus">ESA_00400</name>
</gene>
<keyword id="KW-0067">ATP-binding</keyword>
<keyword id="KW-0963">Cytoplasm</keyword>
<keyword id="KW-0460">Magnesium</keyword>
<keyword id="KW-0479">Metal-binding</keyword>
<keyword id="KW-0547">Nucleotide-binding</keyword>
<keyword id="KW-0554">One-carbon metabolism</keyword>
<keyword id="KW-0630">Potassium</keyword>
<keyword id="KW-1185">Reference proteome</keyword>
<keyword id="KW-0808">Transferase</keyword>
<proteinExistence type="inferred from homology"/>
<dbReference type="EC" id="2.5.1.6" evidence="1"/>
<dbReference type="EMBL" id="CP000783">
    <property type="protein sequence ID" value="ABU75698.1"/>
    <property type="molecule type" value="Genomic_DNA"/>
</dbReference>
<dbReference type="RefSeq" id="WP_004385637.1">
    <property type="nucleotide sequence ID" value="NC_009778.1"/>
</dbReference>
<dbReference type="SMR" id="A7MJQ6"/>
<dbReference type="GeneID" id="56733357"/>
<dbReference type="KEGG" id="esa:ESA_00400"/>
<dbReference type="HOGENOM" id="CLU_041802_1_1_6"/>
<dbReference type="UniPathway" id="UPA00315">
    <property type="reaction ID" value="UER00080"/>
</dbReference>
<dbReference type="Proteomes" id="UP000000260">
    <property type="component" value="Chromosome"/>
</dbReference>
<dbReference type="GO" id="GO:0005737">
    <property type="term" value="C:cytoplasm"/>
    <property type="evidence" value="ECO:0007669"/>
    <property type="project" value="UniProtKB-SubCell"/>
</dbReference>
<dbReference type="GO" id="GO:0005524">
    <property type="term" value="F:ATP binding"/>
    <property type="evidence" value="ECO:0007669"/>
    <property type="project" value="UniProtKB-UniRule"/>
</dbReference>
<dbReference type="GO" id="GO:0000287">
    <property type="term" value="F:magnesium ion binding"/>
    <property type="evidence" value="ECO:0007669"/>
    <property type="project" value="UniProtKB-UniRule"/>
</dbReference>
<dbReference type="GO" id="GO:0004478">
    <property type="term" value="F:methionine adenosyltransferase activity"/>
    <property type="evidence" value="ECO:0007669"/>
    <property type="project" value="UniProtKB-UniRule"/>
</dbReference>
<dbReference type="GO" id="GO:0006730">
    <property type="term" value="P:one-carbon metabolic process"/>
    <property type="evidence" value="ECO:0007669"/>
    <property type="project" value="UniProtKB-KW"/>
</dbReference>
<dbReference type="GO" id="GO:0006556">
    <property type="term" value="P:S-adenosylmethionine biosynthetic process"/>
    <property type="evidence" value="ECO:0007669"/>
    <property type="project" value="UniProtKB-UniRule"/>
</dbReference>
<dbReference type="CDD" id="cd18079">
    <property type="entry name" value="S-AdoMet_synt"/>
    <property type="match status" value="1"/>
</dbReference>
<dbReference type="FunFam" id="3.30.300.10:FF:000001">
    <property type="entry name" value="S-adenosylmethionine synthase"/>
    <property type="match status" value="1"/>
</dbReference>
<dbReference type="FunFam" id="3.30.300.10:FF:000003">
    <property type="entry name" value="S-adenosylmethionine synthase"/>
    <property type="match status" value="1"/>
</dbReference>
<dbReference type="Gene3D" id="3.30.300.10">
    <property type="match status" value="3"/>
</dbReference>
<dbReference type="HAMAP" id="MF_00086">
    <property type="entry name" value="S_AdoMet_synth1"/>
    <property type="match status" value="1"/>
</dbReference>
<dbReference type="InterPro" id="IPR022631">
    <property type="entry name" value="ADOMET_SYNTHASE_CS"/>
</dbReference>
<dbReference type="InterPro" id="IPR022630">
    <property type="entry name" value="S-AdoMet_synt_C"/>
</dbReference>
<dbReference type="InterPro" id="IPR022629">
    <property type="entry name" value="S-AdoMet_synt_central"/>
</dbReference>
<dbReference type="InterPro" id="IPR022628">
    <property type="entry name" value="S-AdoMet_synt_N"/>
</dbReference>
<dbReference type="InterPro" id="IPR002133">
    <property type="entry name" value="S-AdoMet_synthetase"/>
</dbReference>
<dbReference type="InterPro" id="IPR022636">
    <property type="entry name" value="S-AdoMet_synthetase_sfam"/>
</dbReference>
<dbReference type="NCBIfam" id="TIGR01034">
    <property type="entry name" value="metK"/>
    <property type="match status" value="1"/>
</dbReference>
<dbReference type="PANTHER" id="PTHR11964">
    <property type="entry name" value="S-ADENOSYLMETHIONINE SYNTHETASE"/>
    <property type="match status" value="1"/>
</dbReference>
<dbReference type="Pfam" id="PF02773">
    <property type="entry name" value="S-AdoMet_synt_C"/>
    <property type="match status" value="1"/>
</dbReference>
<dbReference type="Pfam" id="PF02772">
    <property type="entry name" value="S-AdoMet_synt_M"/>
    <property type="match status" value="1"/>
</dbReference>
<dbReference type="Pfam" id="PF00438">
    <property type="entry name" value="S-AdoMet_synt_N"/>
    <property type="match status" value="1"/>
</dbReference>
<dbReference type="PIRSF" id="PIRSF000497">
    <property type="entry name" value="MAT"/>
    <property type="match status" value="1"/>
</dbReference>
<dbReference type="SUPFAM" id="SSF55973">
    <property type="entry name" value="S-adenosylmethionine synthetase"/>
    <property type="match status" value="3"/>
</dbReference>
<dbReference type="PROSITE" id="PS00376">
    <property type="entry name" value="ADOMET_SYNTHASE_1"/>
    <property type="match status" value="1"/>
</dbReference>
<dbReference type="PROSITE" id="PS00377">
    <property type="entry name" value="ADOMET_SYNTHASE_2"/>
    <property type="match status" value="1"/>
</dbReference>
<feature type="chain" id="PRO_1000007939" description="S-adenosylmethionine synthase">
    <location>
        <begin position="1"/>
        <end position="384"/>
    </location>
</feature>
<feature type="region of interest" description="Flexible loop" evidence="1">
    <location>
        <begin position="99"/>
        <end position="109"/>
    </location>
</feature>
<feature type="binding site" description="in other chain" evidence="1">
    <location>
        <position position="15"/>
    </location>
    <ligand>
        <name>ATP</name>
        <dbReference type="ChEBI" id="CHEBI:30616"/>
        <note>ligand shared between two neighboring subunits</note>
    </ligand>
</feature>
<feature type="binding site" evidence="1">
    <location>
        <position position="17"/>
    </location>
    <ligand>
        <name>Mg(2+)</name>
        <dbReference type="ChEBI" id="CHEBI:18420"/>
    </ligand>
</feature>
<feature type="binding site" evidence="1">
    <location>
        <position position="43"/>
    </location>
    <ligand>
        <name>K(+)</name>
        <dbReference type="ChEBI" id="CHEBI:29103"/>
    </ligand>
</feature>
<feature type="binding site" description="in other chain" evidence="1">
    <location>
        <position position="56"/>
    </location>
    <ligand>
        <name>L-methionine</name>
        <dbReference type="ChEBI" id="CHEBI:57844"/>
        <note>ligand shared between two neighboring subunits</note>
    </ligand>
</feature>
<feature type="binding site" description="in other chain" evidence="1">
    <location>
        <position position="99"/>
    </location>
    <ligand>
        <name>L-methionine</name>
        <dbReference type="ChEBI" id="CHEBI:57844"/>
        <note>ligand shared between two neighboring subunits</note>
    </ligand>
</feature>
<feature type="binding site" description="in other chain" evidence="1">
    <location>
        <begin position="164"/>
        <end position="166"/>
    </location>
    <ligand>
        <name>ATP</name>
        <dbReference type="ChEBI" id="CHEBI:30616"/>
        <note>ligand shared between two neighboring subunits</note>
    </ligand>
</feature>
<feature type="binding site" description="in other chain" evidence="1">
    <location>
        <begin position="230"/>
        <end position="231"/>
    </location>
    <ligand>
        <name>ATP</name>
        <dbReference type="ChEBI" id="CHEBI:30616"/>
        <note>ligand shared between two neighboring subunits</note>
    </ligand>
</feature>
<feature type="binding site" evidence="1">
    <location>
        <position position="239"/>
    </location>
    <ligand>
        <name>ATP</name>
        <dbReference type="ChEBI" id="CHEBI:30616"/>
        <note>ligand shared between two neighboring subunits</note>
    </ligand>
</feature>
<feature type="binding site" evidence="1">
    <location>
        <position position="239"/>
    </location>
    <ligand>
        <name>L-methionine</name>
        <dbReference type="ChEBI" id="CHEBI:57844"/>
        <note>ligand shared between two neighboring subunits</note>
    </ligand>
</feature>
<feature type="binding site" description="in other chain" evidence="1">
    <location>
        <begin position="245"/>
        <end position="246"/>
    </location>
    <ligand>
        <name>ATP</name>
        <dbReference type="ChEBI" id="CHEBI:30616"/>
        <note>ligand shared between two neighboring subunits</note>
    </ligand>
</feature>
<feature type="binding site" evidence="1">
    <location>
        <position position="262"/>
    </location>
    <ligand>
        <name>ATP</name>
        <dbReference type="ChEBI" id="CHEBI:30616"/>
        <note>ligand shared between two neighboring subunits</note>
    </ligand>
</feature>
<feature type="binding site" evidence="1">
    <location>
        <position position="266"/>
    </location>
    <ligand>
        <name>ATP</name>
        <dbReference type="ChEBI" id="CHEBI:30616"/>
        <note>ligand shared between two neighboring subunits</note>
    </ligand>
</feature>
<feature type="binding site" description="in other chain" evidence="1">
    <location>
        <position position="270"/>
    </location>
    <ligand>
        <name>L-methionine</name>
        <dbReference type="ChEBI" id="CHEBI:57844"/>
        <note>ligand shared between two neighboring subunits</note>
    </ligand>
</feature>
<comment type="function">
    <text evidence="1">Catalyzes the formation of S-adenosylmethionine (AdoMet) from methionine and ATP. The overall synthetic reaction is composed of two sequential steps, AdoMet formation and the subsequent tripolyphosphate hydrolysis which occurs prior to release of AdoMet from the enzyme.</text>
</comment>
<comment type="catalytic activity">
    <reaction evidence="1">
        <text>L-methionine + ATP + H2O = S-adenosyl-L-methionine + phosphate + diphosphate</text>
        <dbReference type="Rhea" id="RHEA:21080"/>
        <dbReference type="ChEBI" id="CHEBI:15377"/>
        <dbReference type="ChEBI" id="CHEBI:30616"/>
        <dbReference type="ChEBI" id="CHEBI:33019"/>
        <dbReference type="ChEBI" id="CHEBI:43474"/>
        <dbReference type="ChEBI" id="CHEBI:57844"/>
        <dbReference type="ChEBI" id="CHEBI:59789"/>
        <dbReference type="EC" id="2.5.1.6"/>
    </reaction>
</comment>
<comment type="cofactor">
    <cofactor evidence="1">
        <name>Mg(2+)</name>
        <dbReference type="ChEBI" id="CHEBI:18420"/>
    </cofactor>
    <text evidence="1">Binds 2 divalent ions per subunit.</text>
</comment>
<comment type="cofactor">
    <cofactor evidence="1">
        <name>K(+)</name>
        <dbReference type="ChEBI" id="CHEBI:29103"/>
    </cofactor>
    <text evidence="1">Binds 1 potassium ion per subunit.</text>
</comment>
<comment type="pathway">
    <text evidence="1">Amino-acid biosynthesis; S-adenosyl-L-methionine biosynthesis; S-adenosyl-L-methionine from L-methionine: step 1/1.</text>
</comment>
<comment type="subunit">
    <text evidence="1">Homotetramer; dimer of dimers.</text>
</comment>
<comment type="subcellular location">
    <subcellularLocation>
        <location evidence="1">Cytoplasm</location>
    </subcellularLocation>
</comment>
<comment type="similarity">
    <text evidence="1">Belongs to the AdoMet synthase family.</text>
</comment>
<evidence type="ECO:0000255" key="1">
    <source>
        <dbReference type="HAMAP-Rule" id="MF_00086"/>
    </source>
</evidence>
<reference key="1">
    <citation type="journal article" date="2010" name="PLoS ONE">
        <title>Genome sequence of Cronobacter sakazakii BAA-894 and comparative genomic hybridization analysis with other Cronobacter species.</title>
        <authorList>
            <person name="Kucerova E."/>
            <person name="Clifton S.W."/>
            <person name="Xia X.Q."/>
            <person name="Long F."/>
            <person name="Porwollik S."/>
            <person name="Fulton L."/>
            <person name="Fronick C."/>
            <person name="Minx P."/>
            <person name="Kyung K."/>
            <person name="Warren W."/>
            <person name="Fulton R."/>
            <person name="Feng D."/>
            <person name="Wollam A."/>
            <person name="Shah N."/>
            <person name="Bhonagiri V."/>
            <person name="Nash W.E."/>
            <person name="Hallsworth-Pepin K."/>
            <person name="Wilson R.K."/>
            <person name="McClelland M."/>
            <person name="Forsythe S.J."/>
        </authorList>
    </citation>
    <scope>NUCLEOTIDE SEQUENCE [LARGE SCALE GENOMIC DNA]</scope>
    <source>
        <strain>ATCC BAA-894</strain>
    </source>
</reference>
<protein>
    <recommendedName>
        <fullName evidence="1">S-adenosylmethionine synthase</fullName>
        <shortName evidence="1">AdoMet synthase</shortName>
        <ecNumber evidence="1">2.5.1.6</ecNumber>
    </recommendedName>
    <alternativeName>
        <fullName evidence="1">MAT</fullName>
    </alternativeName>
    <alternativeName>
        <fullName evidence="1">Methionine adenosyltransferase</fullName>
    </alternativeName>
</protein>